<reference key="1">
    <citation type="journal article" date="2002" name="Environ. Microbiol.">
        <title>Complete genome sequence and comparative analysis of the metabolically versatile Pseudomonas putida KT2440.</title>
        <authorList>
            <person name="Nelson K.E."/>
            <person name="Weinel C."/>
            <person name="Paulsen I.T."/>
            <person name="Dodson R.J."/>
            <person name="Hilbert H."/>
            <person name="Martins dos Santos V.A.P."/>
            <person name="Fouts D.E."/>
            <person name="Gill S.R."/>
            <person name="Pop M."/>
            <person name="Holmes M."/>
            <person name="Brinkac L.M."/>
            <person name="Beanan M.J."/>
            <person name="DeBoy R.T."/>
            <person name="Daugherty S.C."/>
            <person name="Kolonay J.F."/>
            <person name="Madupu R."/>
            <person name="Nelson W.C."/>
            <person name="White O."/>
            <person name="Peterson J.D."/>
            <person name="Khouri H.M."/>
            <person name="Hance I."/>
            <person name="Chris Lee P."/>
            <person name="Holtzapple E.K."/>
            <person name="Scanlan D."/>
            <person name="Tran K."/>
            <person name="Moazzez A."/>
            <person name="Utterback T.R."/>
            <person name="Rizzo M."/>
            <person name="Lee K."/>
            <person name="Kosack D."/>
            <person name="Moestl D."/>
            <person name="Wedler H."/>
            <person name="Lauber J."/>
            <person name="Stjepandic D."/>
            <person name="Hoheisel J."/>
            <person name="Straetz M."/>
            <person name="Heim S."/>
            <person name="Kiewitz C."/>
            <person name="Eisen J.A."/>
            <person name="Timmis K.N."/>
            <person name="Duesterhoeft A."/>
            <person name="Tuemmler B."/>
            <person name="Fraser C.M."/>
        </authorList>
    </citation>
    <scope>NUCLEOTIDE SEQUENCE [LARGE SCALE GENOMIC DNA]</scope>
    <source>
        <strain>ATCC 47054 / DSM 6125 / CFBP 8728 / NCIMB 11950 / KT2440</strain>
    </source>
</reference>
<gene>
    <name evidence="1" type="primary">tolB</name>
    <name type="ordered locus">PP_1222</name>
</gene>
<evidence type="ECO:0000255" key="1">
    <source>
        <dbReference type="HAMAP-Rule" id="MF_00671"/>
    </source>
</evidence>
<feature type="signal peptide" evidence="1">
    <location>
        <begin position="1"/>
        <end position="21"/>
    </location>
</feature>
<feature type="chain" id="PRO_0000034673" description="Tol-Pal system protein TolB" evidence="1">
    <location>
        <begin position="22"/>
        <end position="433"/>
    </location>
</feature>
<organism>
    <name type="scientific">Pseudomonas putida (strain ATCC 47054 / DSM 6125 / CFBP 8728 / NCIMB 11950 / KT2440)</name>
    <dbReference type="NCBI Taxonomy" id="160488"/>
    <lineage>
        <taxon>Bacteria</taxon>
        <taxon>Pseudomonadati</taxon>
        <taxon>Pseudomonadota</taxon>
        <taxon>Gammaproteobacteria</taxon>
        <taxon>Pseudomonadales</taxon>
        <taxon>Pseudomonadaceae</taxon>
        <taxon>Pseudomonas</taxon>
    </lineage>
</organism>
<name>TOLB_PSEPK</name>
<sequence length="433" mass="47431">MIKRLRGLLVMLCCVAGMAVAEEKNILVTSGSDRATPIAVVPFGLQGGSVLPEDIADIIGNDLRNSGYYSPIPRQNMISQPSQASEVIFRDWKALGAQYVMVGSIVPSGGRLQVQYALFNVATEQQVLTGSVAGSTDQLRDMAHYIADQSFEKLTGIKGAFSTRMLYVTAERFSTNNTRYTLQRSDYDGARAVTLLQSREPILSPRFAPDGKRIAYVSFEQKRPRIFVQNIDTGRREQVTNFEGLNGAPAWSPDGSRLAFVLSKDGNPDIYVMNVASRQISRVTAGPGINTEPFWGKDGNTLYFTSDRGGKPQIYKQSVSGGGAERVTFVGNYNANPKLSADEKTLVMIHRQQGFTNFKVAAQDLQRGSVKILSETSLDESPTVAPNGTMLIYATRQQGRGVLMLVSLNGRVRLPLPTAQGEVREPSWSPYLN</sequence>
<accession>P0A173</accession>
<accession>Q88NI5</accession>
<accession>Q9WWX0</accession>
<proteinExistence type="inferred from homology"/>
<keyword id="KW-0131">Cell cycle</keyword>
<keyword id="KW-0132">Cell division</keyword>
<keyword id="KW-0574">Periplasm</keyword>
<keyword id="KW-1185">Reference proteome</keyword>
<keyword id="KW-0732">Signal</keyword>
<protein>
    <recommendedName>
        <fullName evidence="1">Tol-Pal system protein TolB</fullName>
    </recommendedName>
</protein>
<dbReference type="EMBL" id="AE015451">
    <property type="protein sequence ID" value="AAN66846.1"/>
    <property type="molecule type" value="Genomic_DNA"/>
</dbReference>
<dbReference type="RefSeq" id="NP_743382.1">
    <property type="nucleotide sequence ID" value="NC_002947.4"/>
</dbReference>
<dbReference type="SMR" id="P0A173"/>
<dbReference type="STRING" id="160488.PP_1222"/>
<dbReference type="PaxDb" id="160488-PP_1222"/>
<dbReference type="KEGG" id="ppu:PP_1222"/>
<dbReference type="PATRIC" id="fig|160488.4.peg.1298"/>
<dbReference type="eggNOG" id="COG0823">
    <property type="taxonomic scope" value="Bacteria"/>
</dbReference>
<dbReference type="HOGENOM" id="CLU_047123_0_0_6"/>
<dbReference type="OrthoDB" id="9802240at2"/>
<dbReference type="PhylomeDB" id="P0A173"/>
<dbReference type="BioCyc" id="PPUT160488:G1G01-1307-MONOMER"/>
<dbReference type="Proteomes" id="UP000000556">
    <property type="component" value="Chromosome"/>
</dbReference>
<dbReference type="GO" id="GO:0042597">
    <property type="term" value="C:periplasmic space"/>
    <property type="evidence" value="ECO:0007669"/>
    <property type="project" value="UniProtKB-SubCell"/>
</dbReference>
<dbReference type="GO" id="GO:0051301">
    <property type="term" value="P:cell division"/>
    <property type="evidence" value="ECO:0007669"/>
    <property type="project" value="UniProtKB-UniRule"/>
</dbReference>
<dbReference type="GO" id="GO:0017038">
    <property type="term" value="P:protein import"/>
    <property type="evidence" value="ECO:0007669"/>
    <property type="project" value="InterPro"/>
</dbReference>
<dbReference type="Gene3D" id="2.120.10.30">
    <property type="entry name" value="TolB, C-terminal domain"/>
    <property type="match status" value="1"/>
</dbReference>
<dbReference type="Gene3D" id="3.40.50.10070">
    <property type="entry name" value="TolB, N-terminal domain"/>
    <property type="match status" value="1"/>
</dbReference>
<dbReference type="HAMAP" id="MF_00671">
    <property type="entry name" value="TolB"/>
    <property type="match status" value="1"/>
</dbReference>
<dbReference type="InterPro" id="IPR011042">
    <property type="entry name" value="6-blade_b-propeller_TolB-like"/>
</dbReference>
<dbReference type="InterPro" id="IPR011659">
    <property type="entry name" value="PD40"/>
</dbReference>
<dbReference type="InterPro" id="IPR014167">
    <property type="entry name" value="Tol-Pal_TolB"/>
</dbReference>
<dbReference type="InterPro" id="IPR007195">
    <property type="entry name" value="TolB_N"/>
</dbReference>
<dbReference type="NCBIfam" id="TIGR02800">
    <property type="entry name" value="propeller_TolB"/>
    <property type="match status" value="1"/>
</dbReference>
<dbReference type="PANTHER" id="PTHR36842:SF1">
    <property type="entry name" value="PROTEIN TOLB"/>
    <property type="match status" value="1"/>
</dbReference>
<dbReference type="PANTHER" id="PTHR36842">
    <property type="entry name" value="PROTEIN TOLB HOMOLOG"/>
    <property type="match status" value="1"/>
</dbReference>
<dbReference type="Pfam" id="PF07676">
    <property type="entry name" value="PD40"/>
    <property type="match status" value="4"/>
</dbReference>
<dbReference type="Pfam" id="PF04052">
    <property type="entry name" value="TolB_N"/>
    <property type="match status" value="1"/>
</dbReference>
<dbReference type="SUPFAM" id="SSF52964">
    <property type="entry name" value="TolB, N-terminal domain"/>
    <property type="match status" value="1"/>
</dbReference>
<dbReference type="SUPFAM" id="SSF69304">
    <property type="entry name" value="Tricorn protease N-terminal domain"/>
    <property type="match status" value="1"/>
</dbReference>
<comment type="function">
    <text evidence="1">Part of the Tol-Pal system, which plays a role in outer membrane invagination during cell division and is important for maintaining outer membrane integrity.</text>
</comment>
<comment type="subunit">
    <text evidence="1">The Tol-Pal system is composed of five core proteins: the inner membrane proteins TolA, TolQ and TolR, the periplasmic protein TolB and the outer membrane protein Pal. They form a network linking the inner and outer membranes and the peptidoglycan layer.</text>
</comment>
<comment type="subcellular location">
    <subcellularLocation>
        <location evidence="1">Periplasm</location>
    </subcellularLocation>
</comment>
<comment type="similarity">
    <text evidence="1">Belongs to the TolB family.</text>
</comment>